<comment type="function">
    <text evidence="1">Catalyzes the attachment of alanine to tRNA(Ala) in a two-step reaction: alanine is first activated by ATP to form Ala-AMP and then transferred to the acceptor end of tRNA(Ala). Also edits incorrectly charged Ser-tRNA(Ala) and Gly-tRNA(Ala) via its editing domain.</text>
</comment>
<comment type="catalytic activity">
    <reaction evidence="1">
        <text>tRNA(Ala) + L-alanine + ATP = L-alanyl-tRNA(Ala) + AMP + diphosphate</text>
        <dbReference type="Rhea" id="RHEA:12540"/>
        <dbReference type="Rhea" id="RHEA-COMP:9657"/>
        <dbReference type="Rhea" id="RHEA-COMP:9923"/>
        <dbReference type="ChEBI" id="CHEBI:30616"/>
        <dbReference type="ChEBI" id="CHEBI:33019"/>
        <dbReference type="ChEBI" id="CHEBI:57972"/>
        <dbReference type="ChEBI" id="CHEBI:78442"/>
        <dbReference type="ChEBI" id="CHEBI:78497"/>
        <dbReference type="ChEBI" id="CHEBI:456215"/>
        <dbReference type="EC" id="6.1.1.7"/>
    </reaction>
</comment>
<comment type="cofactor">
    <cofactor evidence="1">
        <name>Zn(2+)</name>
        <dbReference type="ChEBI" id="CHEBI:29105"/>
    </cofactor>
    <text evidence="1">Binds 1 zinc ion per subunit.</text>
</comment>
<comment type="subcellular location">
    <subcellularLocation>
        <location evidence="1">Cytoplasm</location>
    </subcellularLocation>
</comment>
<comment type="domain">
    <text evidence="1">Consists of three domains; the N-terminal catalytic domain, the editing domain and the C-terminal C-Ala domain. The editing domain removes incorrectly charged amino acids, while the C-Ala domain, along with tRNA(Ala), serves as a bridge to cooperatively bring together the editing and aminoacylation centers thus stimulating deacylation of misacylated tRNAs.</text>
</comment>
<comment type="similarity">
    <text evidence="1">Belongs to the class-II aminoacyl-tRNA synthetase family.</text>
</comment>
<feature type="chain" id="PRO_0000075099" description="Alanine--tRNA ligase">
    <location>
        <begin position="1"/>
        <end position="888"/>
    </location>
</feature>
<feature type="binding site" evidence="1">
    <location>
        <position position="573"/>
    </location>
    <ligand>
        <name>Zn(2+)</name>
        <dbReference type="ChEBI" id="CHEBI:29105"/>
    </ligand>
</feature>
<feature type="binding site" evidence="1">
    <location>
        <position position="577"/>
    </location>
    <ligand>
        <name>Zn(2+)</name>
        <dbReference type="ChEBI" id="CHEBI:29105"/>
    </ligand>
</feature>
<feature type="binding site" evidence="1">
    <location>
        <position position="676"/>
    </location>
    <ligand>
        <name>Zn(2+)</name>
        <dbReference type="ChEBI" id="CHEBI:29105"/>
    </ligand>
</feature>
<feature type="binding site" evidence="1">
    <location>
        <position position="680"/>
    </location>
    <ligand>
        <name>Zn(2+)</name>
        <dbReference type="ChEBI" id="CHEBI:29105"/>
    </ligand>
</feature>
<organism>
    <name type="scientific">Corynebacterium glutamicum (strain ATCC 13032 / DSM 20300 / JCM 1318 / BCRC 11384 / CCUG 27702 / LMG 3730 / NBRC 12168 / NCIMB 10025 / NRRL B-2784 / 534)</name>
    <dbReference type="NCBI Taxonomy" id="196627"/>
    <lineage>
        <taxon>Bacteria</taxon>
        <taxon>Bacillati</taxon>
        <taxon>Actinomycetota</taxon>
        <taxon>Actinomycetes</taxon>
        <taxon>Mycobacteriales</taxon>
        <taxon>Corynebacteriaceae</taxon>
        <taxon>Corynebacterium</taxon>
    </lineage>
</organism>
<accession>Q8NQ22</accession>
<evidence type="ECO:0000255" key="1">
    <source>
        <dbReference type="HAMAP-Rule" id="MF_00036"/>
    </source>
</evidence>
<gene>
    <name evidence="1" type="primary">alaS</name>
    <name type="ordered locus">Cgl1632</name>
    <name type="ordered locus">cg1838</name>
</gene>
<keyword id="KW-0030">Aminoacyl-tRNA synthetase</keyword>
<keyword id="KW-0067">ATP-binding</keyword>
<keyword id="KW-0963">Cytoplasm</keyword>
<keyword id="KW-0436">Ligase</keyword>
<keyword id="KW-0479">Metal-binding</keyword>
<keyword id="KW-0547">Nucleotide-binding</keyword>
<keyword id="KW-0648">Protein biosynthesis</keyword>
<keyword id="KW-1185">Reference proteome</keyword>
<keyword id="KW-0694">RNA-binding</keyword>
<keyword id="KW-0820">tRNA-binding</keyword>
<keyword id="KW-0862">Zinc</keyword>
<reference key="1">
    <citation type="journal article" date="2003" name="Appl. Microbiol. Biotechnol.">
        <title>The Corynebacterium glutamicum genome: features and impacts on biotechnological processes.</title>
        <authorList>
            <person name="Ikeda M."/>
            <person name="Nakagawa S."/>
        </authorList>
    </citation>
    <scope>NUCLEOTIDE SEQUENCE [LARGE SCALE GENOMIC DNA]</scope>
    <source>
        <strain>ATCC 13032 / DSM 20300 / JCM 1318 / BCRC 11384 / CCUG 27702 / LMG 3730 / NBRC 12168 / NCIMB 10025 / NRRL B-2784 / 534</strain>
    </source>
</reference>
<reference key="2">
    <citation type="journal article" date="2003" name="J. Biotechnol.">
        <title>The complete Corynebacterium glutamicum ATCC 13032 genome sequence and its impact on the production of L-aspartate-derived amino acids and vitamins.</title>
        <authorList>
            <person name="Kalinowski J."/>
            <person name="Bathe B."/>
            <person name="Bartels D."/>
            <person name="Bischoff N."/>
            <person name="Bott M."/>
            <person name="Burkovski A."/>
            <person name="Dusch N."/>
            <person name="Eggeling L."/>
            <person name="Eikmanns B.J."/>
            <person name="Gaigalat L."/>
            <person name="Goesmann A."/>
            <person name="Hartmann M."/>
            <person name="Huthmacher K."/>
            <person name="Kraemer R."/>
            <person name="Linke B."/>
            <person name="McHardy A.C."/>
            <person name="Meyer F."/>
            <person name="Moeckel B."/>
            <person name="Pfefferle W."/>
            <person name="Puehler A."/>
            <person name="Rey D.A."/>
            <person name="Rueckert C."/>
            <person name="Rupp O."/>
            <person name="Sahm H."/>
            <person name="Wendisch V.F."/>
            <person name="Wiegraebe I."/>
            <person name="Tauch A."/>
        </authorList>
    </citation>
    <scope>NUCLEOTIDE SEQUENCE [LARGE SCALE GENOMIC DNA]</scope>
    <source>
        <strain>ATCC 13032 / DSM 20300 / JCM 1318 / BCRC 11384 / CCUG 27702 / LMG 3730 / NBRC 12168 / NCIMB 10025 / NRRL B-2784 / 534</strain>
    </source>
</reference>
<proteinExistence type="inferred from homology"/>
<protein>
    <recommendedName>
        <fullName evidence="1">Alanine--tRNA ligase</fullName>
        <ecNumber evidence="1">6.1.1.7</ecNumber>
    </recommendedName>
    <alternativeName>
        <fullName evidence="1">Alanyl-tRNA synthetase</fullName>
        <shortName evidence="1">AlaRS</shortName>
    </alternativeName>
</protein>
<dbReference type="EC" id="6.1.1.7" evidence="1"/>
<dbReference type="EMBL" id="BA000036">
    <property type="protein sequence ID" value="BAB99025.1"/>
    <property type="molecule type" value="Genomic_DNA"/>
</dbReference>
<dbReference type="EMBL" id="BX927152">
    <property type="protein sequence ID" value="CAF21641.1"/>
    <property type="molecule type" value="Genomic_DNA"/>
</dbReference>
<dbReference type="RefSeq" id="NP_600846.1">
    <property type="nucleotide sequence ID" value="NC_003450.3"/>
</dbReference>
<dbReference type="RefSeq" id="WP_011014496.1">
    <property type="nucleotide sequence ID" value="NC_006958.1"/>
</dbReference>
<dbReference type="SMR" id="Q8NQ22"/>
<dbReference type="STRING" id="196627.cg1838"/>
<dbReference type="GeneID" id="1019601"/>
<dbReference type="KEGG" id="cgb:cg1838"/>
<dbReference type="KEGG" id="cgl:Cgl1632"/>
<dbReference type="PATRIC" id="fig|196627.13.peg.1593"/>
<dbReference type="eggNOG" id="COG0013">
    <property type="taxonomic scope" value="Bacteria"/>
</dbReference>
<dbReference type="HOGENOM" id="CLU_004485_1_1_11"/>
<dbReference type="OrthoDB" id="9803884at2"/>
<dbReference type="BioCyc" id="CORYNE:G18NG-11217-MONOMER"/>
<dbReference type="Proteomes" id="UP000000582">
    <property type="component" value="Chromosome"/>
</dbReference>
<dbReference type="Proteomes" id="UP000001009">
    <property type="component" value="Chromosome"/>
</dbReference>
<dbReference type="GO" id="GO:0005829">
    <property type="term" value="C:cytosol"/>
    <property type="evidence" value="ECO:0007669"/>
    <property type="project" value="TreeGrafter"/>
</dbReference>
<dbReference type="GO" id="GO:0004813">
    <property type="term" value="F:alanine-tRNA ligase activity"/>
    <property type="evidence" value="ECO:0007669"/>
    <property type="project" value="UniProtKB-UniRule"/>
</dbReference>
<dbReference type="GO" id="GO:0002161">
    <property type="term" value="F:aminoacyl-tRNA deacylase activity"/>
    <property type="evidence" value="ECO:0007669"/>
    <property type="project" value="TreeGrafter"/>
</dbReference>
<dbReference type="GO" id="GO:0005524">
    <property type="term" value="F:ATP binding"/>
    <property type="evidence" value="ECO:0007669"/>
    <property type="project" value="UniProtKB-UniRule"/>
</dbReference>
<dbReference type="GO" id="GO:0000049">
    <property type="term" value="F:tRNA binding"/>
    <property type="evidence" value="ECO:0007669"/>
    <property type="project" value="UniProtKB-KW"/>
</dbReference>
<dbReference type="GO" id="GO:0008270">
    <property type="term" value="F:zinc ion binding"/>
    <property type="evidence" value="ECO:0007669"/>
    <property type="project" value="UniProtKB-UniRule"/>
</dbReference>
<dbReference type="GO" id="GO:0006419">
    <property type="term" value="P:alanyl-tRNA aminoacylation"/>
    <property type="evidence" value="ECO:0007669"/>
    <property type="project" value="UniProtKB-UniRule"/>
</dbReference>
<dbReference type="CDD" id="cd00673">
    <property type="entry name" value="AlaRS_core"/>
    <property type="match status" value="1"/>
</dbReference>
<dbReference type="FunFam" id="2.40.30.130:FF:000001">
    <property type="entry name" value="Alanine--tRNA ligase"/>
    <property type="match status" value="1"/>
</dbReference>
<dbReference type="FunFam" id="3.10.310.40:FF:000001">
    <property type="entry name" value="Alanine--tRNA ligase"/>
    <property type="match status" value="1"/>
</dbReference>
<dbReference type="FunFam" id="3.30.54.20:FF:000001">
    <property type="entry name" value="Alanine--tRNA ligase"/>
    <property type="match status" value="1"/>
</dbReference>
<dbReference type="FunFam" id="3.30.930.10:FF:000004">
    <property type="entry name" value="Alanine--tRNA ligase"/>
    <property type="match status" value="1"/>
</dbReference>
<dbReference type="FunFam" id="3.30.980.10:FF:000004">
    <property type="entry name" value="Alanine--tRNA ligase, cytoplasmic"/>
    <property type="match status" value="1"/>
</dbReference>
<dbReference type="Gene3D" id="2.40.30.130">
    <property type="match status" value="1"/>
</dbReference>
<dbReference type="Gene3D" id="3.10.310.40">
    <property type="match status" value="1"/>
</dbReference>
<dbReference type="Gene3D" id="3.30.54.20">
    <property type="match status" value="1"/>
</dbReference>
<dbReference type="Gene3D" id="6.10.250.550">
    <property type="match status" value="1"/>
</dbReference>
<dbReference type="Gene3D" id="3.30.930.10">
    <property type="entry name" value="Bira Bifunctional Protein, Domain 2"/>
    <property type="match status" value="1"/>
</dbReference>
<dbReference type="Gene3D" id="3.30.980.10">
    <property type="entry name" value="Threonyl-trna Synthetase, Chain A, domain 2"/>
    <property type="match status" value="1"/>
</dbReference>
<dbReference type="HAMAP" id="MF_00036_B">
    <property type="entry name" value="Ala_tRNA_synth_B"/>
    <property type="match status" value="1"/>
</dbReference>
<dbReference type="InterPro" id="IPR045864">
    <property type="entry name" value="aa-tRNA-synth_II/BPL/LPL"/>
</dbReference>
<dbReference type="InterPro" id="IPR002318">
    <property type="entry name" value="Ala-tRNA-lgiase_IIc"/>
</dbReference>
<dbReference type="InterPro" id="IPR018162">
    <property type="entry name" value="Ala-tRNA-ligase_IIc_anticod-bd"/>
</dbReference>
<dbReference type="InterPro" id="IPR018165">
    <property type="entry name" value="Ala-tRNA-synth_IIc_core"/>
</dbReference>
<dbReference type="InterPro" id="IPR018164">
    <property type="entry name" value="Ala-tRNA-synth_IIc_N"/>
</dbReference>
<dbReference type="InterPro" id="IPR050058">
    <property type="entry name" value="Ala-tRNA_ligase"/>
</dbReference>
<dbReference type="InterPro" id="IPR023033">
    <property type="entry name" value="Ala_tRNA_ligase_euk/bac"/>
</dbReference>
<dbReference type="InterPro" id="IPR003156">
    <property type="entry name" value="DHHA1_dom"/>
</dbReference>
<dbReference type="InterPro" id="IPR018163">
    <property type="entry name" value="Thr/Ala-tRNA-synth_IIc_edit"/>
</dbReference>
<dbReference type="InterPro" id="IPR009000">
    <property type="entry name" value="Transl_B-barrel_sf"/>
</dbReference>
<dbReference type="InterPro" id="IPR012947">
    <property type="entry name" value="tRNA_SAD"/>
</dbReference>
<dbReference type="NCBIfam" id="TIGR00344">
    <property type="entry name" value="alaS"/>
    <property type="match status" value="1"/>
</dbReference>
<dbReference type="PANTHER" id="PTHR11777:SF9">
    <property type="entry name" value="ALANINE--TRNA LIGASE, CYTOPLASMIC"/>
    <property type="match status" value="1"/>
</dbReference>
<dbReference type="PANTHER" id="PTHR11777">
    <property type="entry name" value="ALANYL-TRNA SYNTHETASE"/>
    <property type="match status" value="1"/>
</dbReference>
<dbReference type="Pfam" id="PF02272">
    <property type="entry name" value="DHHA1"/>
    <property type="match status" value="1"/>
</dbReference>
<dbReference type="Pfam" id="PF01411">
    <property type="entry name" value="tRNA-synt_2c"/>
    <property type="match status" value="1"/>
</dbReference>
<dbReference type="Pfam" id="PF07973">
    <property type="entry name" value="tRNA_SAD"/>
    <property type="match status" value="1"/>
</dbReference>
<dbReference type="PRINTS" id="PR00980">
    <property type="entry name" value="TRNASYNTHALA"/>
</dbReference>
<dbReference type="SMART" id="SM00863">
    <property type="entry name" value="tRNA_SAD"/>
    <property type="match status" value="1"/>
</dbReference>
<dbReference type="SUPFAM" id="SSF55681">
    <property type="entry name" value="Class II aaRS and biotin synthetases"/>
    <property type="match status" value="1"/>
</dbReference>
<dbReference type="SUPFAM" id="SSF101353">
    <property type="entry name" value="Putative anticodon-binding domain of alanyl-tRNA synthetase (AlaRS)"/>
    <property type="match status" value="1"/>
</dbReference>
<dbReference type="SUPFAM" id="SSF55186">
    <property type="entry name" value="ThrRS/AlaRS common domain"/>
    <property type="match status" value="1"/>
</dbReference>
<dbReference type="SUPFAM" id="SSF50447">
    <property type="entry name" value="Translation proteins"/>
    <property type="match status" value="1"/>
</dbReference>
<dbReference type="PROSITE" id="PS50860">
    <property type="entry name" value="AA_TRNA_LIGASE_II_ALA"/>
    <property type="match status" value="1"/>
</dbReference>
<sequence>MQTHEIRERFTNHFVNAGHQAVPSASLILDDPNLLFVNAGMVPFKPYFLGQQTPPFENGTATSIQKCVRTLDIEEVGITTRHNTFFQMAGNFSFGQYFKEGAITHAWGLLTGSVADGGFGLDPERLWVTVYLDDDEAAEIWEKKIGVPSERIQRLGMADNYWSMGVPGPCGPCSEIYYDRGEKYGKEGGPVADDNRYMEIWNLVFMEKERGQGIGKDNFDILGDLPKKNIDTGMGVERVACILQDVENVYETDLLRPVIDVAETLTGTKYGSDNTSDIRFRVIADHSRTGMMLILDGVTPGNEGRGYILRRLLRRIIRSARLLGATGETMEQFMNTIMDTMTPSYPEIADNRERIMRVAVTEERAFLKTLVSGTHLFEEAATSIKAAGSTKVAGAQAFALHDTYGFPIDLTLEMAAEAGLEVDVEGFDSLMAEQRSRAKADSQAKKHGHTDLSIYREWVDNNPTVFTGFEELDSQSKVLGLLSDGAKISEATEGQEVEVILDQSPLYAESGGQLGDRGQILLGDTVLDVHDVQKIGKKLWVHKALVANGGLAVGDEVVASVDKQWRHAARQAHTATHLIHAALRQVLGPTALQAGSMNKPGYLRFDFNYTEQLTPAQVEQIQAITNEAVDTDWAVNTVETSLEEAKAMGAMALFGENYGSTVRVVEIGGPFSMELCGGTHVAHSSQIGPVALLGESSIGSGVRRIEAYSGLNSFNYLSKERALAEGLASSLKAPSEELPERVAQLVDKLKAAEKEIEALHRQQLMAQTADLLNNAQEIGGVTTLLLRVKDNTNAGDLRTIATTLKDKLGDREGVLVIASDNAGKVPFVVAATKAAVARGAHSGNLVKLVGSYIDGRGGGKADLAQGSGANIAGLESAFGAVRAEIEAL</sequence>
<name>SYA_CORGL</name>